<protein>
    <recommendedName>
        <fullName evidence="1">Adenylate kinase</fullName>
        <shortName evidence="1">AK</shortName>
        <ecNumber evidence="1">2.7.4.3</ecNumber>
    </recommendedName>
    <alternativeName>
        <fullName evidence="1">ATP-AMP transphosphorylase</fullName>
    </alternativeName>
    <alternativeName>
        <fullName evidence="1">ATP:AMP phosphotransferase</fullName>
    </alternativeName>
    <alternativeName>
        <fullName evidence="1">Adenylate monophosphate kinase</fullName>
    </alternativeName>
</protein>
<gene>
    <name evidence="1" type="primary">adk</name>
    <name type="ordered locus">Syncc9902_1974</name>
</gene>
<name>KAD_SYNS9</name>
<organism>
    <name type="scientific">Synechococcus sp. (strain CC9902)</name>
    <dbReference type="NCBI Taxonomy" id="316279"/>
    <lineage>
        <taxon>Bacteria</taxon>
        <taxon>Bacillati</taxon>
        <taxon>Cyanobacteriota</taxon>
        <taxon>Cyanophyceae</taxon>
        <taxon>Synechococcales</taxon>
        <taxon>Synechococcaceae</taxon>
        <taxon>Synechococcus</taxon>
    </lineage>
</organism>
<dbReference type="EC" id="2.7.4.3" evidence="1"/>
<dbReference type="EMBL" id="CP000097">
    <property type="protein sequence ID" value="ABB26932.1"/>
    <property type="molecule type" value="Genomic_DNA"/>
</dbReference>
<dbReference type="RefSeq" id="WP_011360728.1">
    <property type="nucleotide sequence ID" value="NC_007513.1"/>
</dbReference>
<dbReference type="SMR" id="Q3AW74"/>
<dbReference type="STRING" id="316279.Syncc9902_1974"/>
<dbReference type="KEGG" id="sye:Syncc9902_1974"/>
<dbReference type="eggNOG" id="COG0563">
    <property type="taxonomic scope" value="Bacteria"/>
</dbReference>
<dbReference type="HOGENOM" id="CLU_032354_4_1_3"/>
<dbReference type="OrthoDB" id="9805030at2"/>
<dbReference type="UniPathway" id="UPA00588">
    <property type="reaction ID" value="UER00649"/>
</dbReference>
<dbReference type="Proteomes" id="UP000002712">
    <property type="component" value="Chromosome"/>
</dbReference>
<dbReference type="GO" id="GO:0005737">
    <property type="term" value="C:cytoplasm"/>
    <property type="evidence" value="ECO:0007669"/>
    <property type="project" value="UniProtKB-SubCell"/>
</dbReference>
<dbReference type="GO" id="GO:0004017">
    <property type="term" value="F:adenylate kinase activity"/>
    <property type="evidence" value="ECO:0007669"/>
    <property type="project" value="UniProtKB-UniRule"/>
</dbReference>
<dbReference type="GO" id="GO:0005524">
    <property type="term" value="F:ATP binding"/>
    <property type="evidence" value="ECO:0007669"/>
    <property type="project" value="UniProtKB-UniRule"/>
</dbReference>
<dbReference type="GO" id="GO:0044209">
    <property type="term" value="P:AMP salvage"/>
    <property type="evidence" value="ECO:0007669"/>
    <property type="project" value="UniProtKB-UniRule"/>
</dbReference>
<dbReference type="CDD" id="cd01428">
    <property type="entry name" value="ADK"/>
    <property type="match status" value="1"/>
</dbReference>
<dbReference type="Gene3D" id="3.40.50.300">
    <property type="entry name" value="P-loop containing nucleotide triphosphate hydrolases"/>
    <property type="match status" value="1"/>
</dbReference>
<dbReference type="HAMAP" id="MF_00235">
    <property type="entry name" value="Adenylate_kinase_Adk"/>
    <property type="match status" value="1"/>
</dbReference>
<dbReference type="InterPro" id="IPR000850">
    <property type="entry name" value="Adenylat/UMP-CMP_kin"/>
</dbReference>
<dbReference type="InterPro" id="IPR033690">
    <property type="entry name" value="Adenylat_kinase_CS"/>
</dbReference>
<dbReference type="InterPro" id="IPR027417">
    <property type="entry name" value="P-loop_NTPase"/>
</dbReference>
<dbReference type="NCBIfam" id="NF001381">
    <property type="entry name" value="PRK00279.1-3"/>
    <property type="match status" value="1"/>
</dbReference>
<dbReference type="NCBIfam" id="NF011100">
    <property type="entry name" value="PRK14527.1"/>
    <property type="match status" value="1"/>
</dbReference>
<dbReference type="NCBIfam" id="NF011104">
    <property type="entry name" value="PRK14531.1"/>
    <property type="match status" value="1"/>
</dbReference>
<dbReference type="NCBIfam" id="NF011105">
    <property type="entry name" value="PRK14532.1"/>
    <property type="match status" value="1"/>
</dbReference>
<dbReference type="PANTHER" id="PTHR23359">
    <property type="entry name" value="NUCLEOTIDE KINASE"/>
    <property type="match status" value="1"/>
</dbReference>
<dbReference type="Pfam" id="PF00406">
    <property type="entry name" value="ADK"/>
    <property type="match status" value="1"/>
</dbReference>
<dbReference type="PRINTS" id="PR00094">
    <property type="entry name" value="ADENYLTKNASE"/>
</dbReference>
<dbReference type="SUPFAM" id="SSF52540">
    <property type="entry name" value="P-loop containing nucleoside triphosphate hydrolases"/>
    <property type="match status" value="1"/>
</dbReference>
<dbReference type="PROSITE" id="PS00113">
    <property type="entry name" value="ADENYLATE_KINASE"/>
    <property type="match status" value="1"/>
</dbReference>
<comment type="function">
    <text evidence="1">Catalyzes the reversible transfer of the terminal phosphate group between ATP and AMP. Plays an important role in cellular energy homeostasis and in adenine nucleotide metabolism.</text>
</comment>
<comment type="catalytic activity">
    <reaction evidence="1">
        <text>AMP + ATP = 2 ADP</text>
        <dbReference type="Rhea" id="RHEA:12973"/>
        <dbReference type="ChEBI" id="CHEBI:30616"/>
        <dbReference type="ChEBI" id="CHEBI:456215"/>
        <dbReference type="ChEBI" id="CHEBI:456216"/>
        <dbReference type="EC" id="2.7.4.3"/>
    </reaction>
</comment>
<comment type="pathway">
    <text evidence="1">Purine metabolism; AMP biosynthesis via salvage pathway; AMP from ADP: step 1/1.</text>
</comment>
<comment type="subunit">
    <text evidence="1">Monomer.</text>
</comment>
<comment type="subcellular location">
    <subcellularLocation>
        <location evidence="1">Cytoplasm</location>
    </subcellularLocation>
</comment>
<comment type="domain">
    <text evidence="1">Consists of three domains, a large central CORE domain and two small peripheral domains, NMPbind and LID, which undergo movements during catalysis. The LID domain closes over the site of phosphoryl transfer upon ATP binding. Assembling and dissambling the active center during each catalytic cycle provides an effective means to prevent ATP hydrolysis.</text>
</comment>
<comment type="similarity">
    <text evidence="1">Belongs to the adenylate kinase family.</text>
</comment>
<evidence type="ECO:0000255" key="1">
    <source>
        <dbReference type="HAMAP-Rule" id="MF_00235"/>
    </source>
</evidence>
<sequence>MKNRLLFLGPPGAGKGTQAARICDSNGMKHLSTGDLLRSEVAAGSELGKEAEAVMNRGELVSDQLVLAIVESQMKALSGEGWLLDGFPRTVPQAEALEPLLNELKQPIEAVVLLELDDAVLITRMLSRGRADDNEDVIRNRLEVYRDKTAPLISYYQNKGLLISVPAQGSVEEITERICKVLD</sequence>
<keyword id="KW-0067">ATP-binding</keyword>
<keyword id="KW-0963">Cytoplasm</keyword>
<keyword id="KW-0418">Kinase</keyword>
<keyword id="KW-0545">Nucleotide biosynthesis</keyword>
<keyword id="KW-0547">Nucleotide-binding</keyword>
<keyword id="KW-1185">Reference proteome</keyword>
<keyword id="KW-0808">Transferase</keyword>
<accession>Q3AW74</accession>
<reference key="1">
    <citation type="submission" date="2005-08" db="EMBL/GenBank/DDBJ databases">
        <title>Complete sequence of Synechococcus sp. CC9902.</title>
        <authorList>
            <person name="Copeland A."/>
            <person name="Lucas S."/>
            <person name="Lapidus A."/>
            <person name="Barry K."/>
            <person name="Detter J.C."/>
            <person name="Glavina T."/>
            <person name="Hammon N."/>
            <person name="Israni S."/>
            <person name="Pitluck S."/>
            <person name="Martinez M."/>
            <person name="Schmutz J."/>
            <person name="Larimer F."/>
            <person name="Land M."/>
            <person name="Kyrpides N."/>
            <person name="Ivanova N."/>
            <person name="Richardson P."/>
        </authorList>
    </citation>
    <scope>NUCLEOTIDE SEQUENCE [LARGE SCALE GENOMIC DNA]</scope>
    <source>
        <strain>CC9902</strain>
    </source>
</reference>
<feature type="chain" id="PRO_1000058927" description="Adenylate kinase">
    <location>
        <begin position="1"/>
        <end position="183"/>
    </location>
</feature>
<feature type="region of interest" description="NMP" evidence="1">
    <location>
        <begin position="32"/>
        <end position="61"/>
    </location>
</feature>
<feature type="region of interest" description="LID" evidence="1">
    <location>
        <begin position="127"/>
        <end position="133"/>
    </location>
</feature>
<feature type="binding site" evidence="1">
    <location>
        <begin position="12"/>
        <end position="17"/>
    </location>
    <ligand>
        <name>ATP</name>
        <dbReference type="ChEBI" id="CHEBI:30616"/>
    </ligand>
</feature>
<feature type="binding site" evidence="1">
    <location>
        <position position="33"/>
    </location>
    <ligand>
        <name>AMP</name>
        <dbReference type="ChEBI" id="CHEBI:456215"/>
    </ligand>
</feature>
<feature type="binding site" evidence="1">
    <location>
        <position position="38"/>
    </location>
    <ligand>
        <name>AMP</name>
        <dbReference type="ChEBI" id="CHEBI:456215"/>
    </ligand>
</feature>
<feature type="binding site" evidence="1">
    <location>
        <begin position="59"/>
        <end position="61"/>
    </location>
    <ligand>
        <name>AMP</name>
        <dbReference type="ChEBI" id="CHEBI:456215"/>
    </ligand>
</feature>
<feature type="binding site" evidence="1">
    <location>
        <begin position="86"/>
        <end position="89"/>
    </location>
    <ligand>
        <name>AMP</name>
        <dbReference type="ChEBI" id="CHEBI:456215"/>
    </ligand>
</feature>
<feature type="binding site" evidence="1">
    <location>
        <position position="93"/>
    </location>
    <ligand>
        <name>AMP</name>
        <dbReference type="ChEBI" id="CHEBI:456215"/>
    </ligand>
</feature>
<feature type="binding site" evidence="1">
    <location>
        <position position="128"/>
    </location>
    <ligand>
        <name>ATP</name>
        <dbReference type="ChEBI" id="CHEBI:30616"/>
    </ligand>
</feature>
<feature type="binding site" evidence="1">
    <location>
        <position position="130"/>
    </location>
    <ligand>
        <name>AMP</name>
        <dbReference type="ChEBI" id="CHEBI:456215"/>
    </ligand>
</feature>
<feature type="binding site" evidence="1">
    <location>
        <position position="141"/>
    </location>
    <ligand>
        <name>AMP</name>
        <dbReference type="ChEBI" id="CHEBI:456215"/>
    </ligand>
</feature>
<feature type="binding site" evidence="1">
    <location>
        <position position="169"/>
    </location>
    <ligand>
        <name>ATP</name>
        <dbReference type="ChEBI" id="CHEBI:30616"/>
    </ligand>
</feature>
<proteinExistence type="inferred from homology"/>